<comment type="function">
    <text evidence="5 7 8 9 11 12">Transcription regulator that modulates expression mediated by transcription factors of the GATA family such as pnr and srp. Represses transcription of proneural achaete-scute complex (AS-C), which is usually activated by pnr. Involved in cardiogenesis, blood, and eye development. During hematopoiesis, it is required to restrict the number of crystal cells, probably via its interaction with the isoform SrpNC of srp. Negatively regulates expression of sr. Probably acts by interacting with the GATA-type zinc finger of proteins such as pnr and srp, possibly antagonizing the interaction between the GATA-type zinc finger and some cofactor.</text>
</comment>
<comment type="subunit">
    <text evidence="8 12">Interacts with pnr, although weak this interaction is essential. Interacts with the isoform SrpNC of srp. Interacts with CtBP corepressor.</text>
</comment>
<comment type="interaction">
    <interactant intactId="EBI-110692">
        <id>Q9VPQ6</id>
    </interactant>
    <interactant intactId="EBI-3903251">
        <id>P17679</id>
        <label>Gata1</label>
    </interactant>
    <organismsDiffer>true</organismsDiffer>
    <experiments>2</experiments>
</comment>
<comment type="subcellular location">
    <subcellularLocation>
        <location evidence="11">Nucleus</location>
    </subcellularLocation>
</comment>
<comment type="tissue specificity">
    <text evidence="5 7 11">First expressed in stage 5 at high levels in the primordium of the amnioserosa. Also expressed in germ band extending embryos in cells of the developing anterior and posterior midgut and in hemocyte precursors present in the cephalic mesoderm. In embryonic stage 8, it is expressed in blood cell precursors. By stage 10, it is expressed in hemocyte precursors that have spread throughout the lateral and ventral head mesoderm. By stage 11, it is expressed in the dorsal ectoderm and in precursor cells of the hemocytes and fat body. As embryogenesis proceeds, it is also expressed in stage 13 plasmatocytes migrating throughout the head mesoderm and down the ventral midline. By late embryogenesis, expression strongly decreases but remains in the dorsal ectoderm during dorsal closure, in cells within, or associated with, the central nervous system, and in plasmatocytes circulating throughout the embryonic hemolymph. During larval development, it is expressed in primary and secondary lobes of lymph glands. Expressed in the dorsal part of the thoracic imaginal disk.</text>
</comment>
<comment type="domain">
    <text evidence="4">The CCHC FOG-type zinc fingers 1, 4 and 5 directly bind to GATA-type zinc fingers. The Tyr residue adjacent to the last Cys of the CCHC FOG-type zinc finger is essential for the interaction with GATA-type zinc fingers.</text>
</comment>
<comment type="similarity">
    <text evidence="2">Belongs to the FOG (Friend of GATA) family.</text>
</comment>
<accession>Q9VPQ6</accession>
<accession>O18414</accession>
<accession>Q6AWH0</accession>
<organism>
    <name type="scientific">Drosophila melanogaster</name>
    <name type="common">Fruit fly</name>
    <dbReference type="NCBI Taxonomy" id="7227"/>
    <lineage>
        <taxon>Eukaryota</taxon>
        <taxon>Metazoa</taxon>
        <taxon>Ecdysozoa</taxon>
        <taxon>Arthropoda</taxon>
        <taxon>Hexapoda</taxon>
        <taxon>Insecta</taxon>
        <taxon>Pterygota</taxon>
        <taxon>Neoptera</taxon>
        <taxon>Endopterygota</taxon>
        <taxon>Diptera</taxon>
        <taxon>Brachycera</taxon>
        <taxon>Muscomorpha</taxon>
        <taxon>Ephydroidea</taxon>
        <taxon>Drosophilidae</taxon>
        <taxon>Drosophila</taxon>
        <taxon>Sophophora</taxon>
    </lineage>
</organism>
<protein>
    <recommendedName>
        <fullName>Zinc finger protein ush</fullName>
    </recommendedName>
    <alternativeName>
        <fullName>Protein U-shaped</fullName>
    </alternativeName>
</protein>
<dbReference type="EMBL" id="Y12322">
    <property type="protein sequence ID" value="CAA72991.1"/>
    <property type="molecule type" value="mRNA"/>
</dbReference>
<dbReference type="EMBL" id="AE014134">
    <property type="protein sequence ID" value="AAF51488.2"/>
    <property type="molecule type" value="Genomic_DNA"/>
</dbReference>
<dbReference type="EMBL" id="BT015278">
    <property type="protein sequence ID" value="AAT94507.1"/>
    <property type="molecule type" value="mRNA"/>
</dbReference>
<dbReference type="PIR" id="T13850">
    <property type="entry name" value="T13850"/>
</dbReference>
<dbReference type="RefSeq" id="NP_476780.1">
    <property type="nucleotide sequence ID" value="NM_057432.3"/>
</dbReference>
<dbReference type="PDB" id="1FU9">
    <property type="method" value="NMR"/>
    <property type="chains" value="A=1113-1146"/>
</dbReference>
<dbReference type="PDB" id="1FV5">
    <property type="method" value="NMR"/>
    <property type="chains" value="A=202-235"/>
</dbReference>
<dbReference type="PDB" id="1JN7">
    <property type="method" value="NMR"/>
    <property type="chains" value="A=1113-1146"/>
</dbReference>
<dbReference type="PDB" id="1Y0J">
    <property type="method" value="NMR"/>
    <property type="chains" value="B=202-235"/>
</dbReference>
<dbReference type="PDB" id="2L6Z">
    <property type="method" value="NMR"/>
    <property type="chains" value="B=202-235"/>
</dbReference>
<dbReference type="PDBsum" id="1FU9"/>
<dbReference type="PDBsum" id="1FV5"/>
<dbReference type="PDBsum" id="1JN7"/>
<dbReference type="PDBsum" id="1Y0J"/>
<dbReference type="PDBsum" id="2L6Z"/>
<dbReference type="BMRB" id="Q9VPQ6"/>
<dbReference type="SMR" id="Q9VPQ6"/>
<dbReference type="BioGRID" id="59481">
    <property type="interactions" value="14"/>
</dbReference>
<dbReference type="FunCoup" id="Q9VPQ6">
    <property type="interactions" value="429"/>
</dbReference>
<dbReference type="IntAct" id="Q9VPQ6">
    <property type="interactions" value="1"/>
</dbReference>
<dbReference type="STRING" id="7227.FBpp0302929"/>
<dbReference type="GlyGen" id="Q9VPQ6">
    <property type="glycosylation" value="6 sites"/>
</dbReference>
<dbReference type="iPTMnet" id="Q9VPQ6"/>
<dbReference type="PaxDb" id="7227-FBpp0305228"/>
<dbReference type="DNASU" id="33225"/>
<dbReference type="EnsemblMetazoa" id="FBtr0078063">
    <property type="protein sequence ID" value="FBpp0077723"/>
    <property type="gene ID" value="FBgn0003963"/>
</dbReference>
<dbReference type="GeneID" id="33225"/>
<dbReference type="KEGG" id="dme:Dmel_CG2762"/>
<dbReference type="AGR" id="FB:FBgn0003963"/>
<dbReference type="CTD" id="33225"/>
<dbReference type="FlyBase" id="FBgn0003963">
    <property type="gene designation" value="ush"/>
</dbReference>
<dbReference type="VEuPathDB" id="VectorBase:FBgn0003963"/>
<dbReference type="eggNOG" id="ENOG502QQZP">
    <property type="taxonomic scope" value="Eukaryota"/>
</dbReference>
<dbReference type="GeneTree" id="ENSGT00530000063823"/>
<dbReference type="HOGENOM" id="CLU_002277_0_0_1"/>
<dbReference type="InParanoid" id="Q9VPQ6"/>
<dbReference type="OMA" id="PHKERCS"/>
<dbReference type="OrthoDB" id="8742770at2759"/>
<dbReference type="PhylomeDB" id="Q9VPQ6"/>
<dbReference type="Reactome" id="R-DME-8936459">
    <property type="pathway name" value="RUNX1 regulates genes involved in megakaryocyte differentiation and platelet function"/>
</dbReference>
<dbReference type="Reactome" id="R-DME-983231">
    <property type="pathway name" value="Factors involved in megakaryocyte development and platelet production"/>
</dbReference>
<dbReference type="SignaLink" id="Q9VPQ6"/>
<dbReference type="BioGRID-ORCS" id="33225">
    <property type="hits" value="1 hit in 3 CRISPR screens"/>
</dbReference>
<dbReference type="ChiTaRS" id="ush">
    <property type="organism name" value="fly"/>
</dbReference>
<dbReference type="EvolutionaryTrace" id="Q9VPQ6"/>
<dbReference type="GenomeRNAi" id="33225"/>
<dbReference type="PRO" id="PR:Q9VPQ6"/>
<dbReference type="Proteomes" id="UP000000803">
    <property type="component" value="Chromosome 2L"/>
</dbReference>
<dbReference type="Bgee" id="FBgn0003963">
    <property type="expression patterns" value="Expressed in dorsal appendage forming follicle cell in ovary and 118 other cell types or tissues"/>
</dbReference>
<dbReference type="ExpressionAtlas" id="Q9VPQ6">
    <property type="expression patterns" value="baseline and differential"/>
</dbReference>
<dbReference type="GO" id="GO:0005634">
    <property type="term" value="C:nucleus"/>
    <property type="evidence" value="ECO:0000314"/>
    <property type="project" value="UniProtKB"/>
</dbReference>
<dbReference type="GO" id="GO:0003677">
    <property type="term" value="F:DNA binding"/>
    <property type="evidence" value="ECO:0007669"/>
    <property type="project" value="UniProtKB-KW"/>
</dbReference>
<dbReference type="GO" id="GO:0001217">
    <property type="term" value="F:DNA-binding transcription repressor activity"/>
    <property type="evidence" value="ECO:0000314"/>
    <property type="project" value="FlyBase"/>
</dbReference>
<dbReference type="GO" id="GO:0061629">
    <property type="term" value="F:RNA polymerase II-specific DNA-binding transcription factor binding"/>
    <property type="evidence" value="ECO:0000353"/>
    <property type="project" value="FlyBase"/>
</dbReference>
<dbReference type="GO" id="GO:0008270">
    <property type="term" value="F:zinc ion binding"/>
    <property type="evidence" value="ECO:0007669"/>
    <property type="project" value="UniProtKB-KW"/>
</dbReference>
<dbReference type="GO" id="GO:0046665">
    <property type="term" value="P:amnioserosa maintenance"/>
    <property type="evidence" value="ECO:0000315"/>
    <property type="project" value="FlyBase"/>
</dbReference>
<dbReference type="GO" id="GO:0030154">
    <property type="term" value="P:cell differentiation"/>
    <property type="evidence" value="ECO:0000318"/>
    <property type="project" value="GO_Central"/>
</dbReference>
<dbReference type="GO" id="GO:0022416">
    <property type="term" value="P:chaeta development"/>
    <property type="evidence" value="ECO:0000316"/>
    <property type="project" value="FlyBase"/>
</dbReference>
<dbReference type="GO" id="GO:0048749">
    <property type="term" value="P:compound eye development"/>
    <property type="evidence" value="ECO:0000315"/>
    <property type="project" value="FlyBase"/>
</dbReference>
<dbReference type="GO" id="GO:0007390">
    <property type="term" value="P:germ-band shortening"/>
    <property type="evidence" value="ECO:0000315"/>
    <property type="project" value="FlyBase"/>
</dbReference>
<dbReference type="GO" id="GO:0007507">
    <property type="term" value="P:heart development"/>
    <property type="evidence" value="ECO:0000315"/>
    <property type="project" value="FlyBase"/>
</dbReference>
<dbReference type="GO" id="GO:0035167">
    <property type="term" value="P:larval lymph gland hemopoiesis"/>
    <property type="evidence" value="ECO:0000315"/>
    <property type="project" value="FlyBase"/>
</dbReference>
<dbReference type="GO" id="GO:0035170">
    <property type="term" value="P:lymph gland crystal cell differentiation"/>
    <property type="evidence" value="ECO:0000315"/>
    <property type="project" value="FlyBase"/>
</dbReference>
<dbReference type="GO" id="GO:0048542">
    <property type="term" value="P:lymph gland development"/>
    <property type="evidence" value="ECO:0000315"/>
    <property type="project" value="FlyBase"/>
</dbReference>
<dbReference type="GO" id="GO:0035169">
    <property type="term" value="P:lymph gland plasmatocyte differentiation"/>
    <property type="evidence" value="ECO:0000315"/>
    <property type="project" value="FlyBase"/>
</dbReference>
<dbReference type="GO" id="GO:0045892">
    <property type="term" value="P:negative regulation of DNA-templated transcription"/>
    <property type="evidence" value="ECO:0000314"/>
    <property type="project" value="FlyBase"/>
</dbReference>
<dbReference type="GO" id="GO:0045611">
    <property type="term" value="P:negative regulation of hemocyte differentiation"/>
    <property type="evidence" value="ECO:0000315"/>
    <property type="project" value="FlyBase"/>
</dbReference>
<dbReference type="GO" id="GO:0046627">
    <property type="term" value="P:negative regulation of insulin receptor signaling pathway"/>
    <property type="evidence" value="ECO:0000315"/>
    <property type="project" value="FlyBase"/>
</dbReference>
<dbReference type="GO" id="GO:0000122">
    <property type="term" value="P:negative regulation of transcription by RNA polymerase II"/>
    <property type="evidence" value="ECO:0000314"/>
    <property type="project" value="FlyBase"/>
</dbReference>
<dbReference type="GO" id="GO:0006963">
    <property type="term" value="P:positive regulation of antibacterial peptide biosynthetic process"/>
    <property type="evidence" value="ECO:0000315"/>
    <property type="project" value="FlyBase"/>
</dbReference>
<dbReference type="GO" id="GO:0045944">
    <property type="term" value="P:positive regulation of transcription by RNA polymerase II"/>
    <property type="evidence" value="ECO:0000318"/>
    <property type="project" value="GO_Central"/>
</dbReference>
<dbReference type="GO" id="GO:0006355">
    <property type="term" value="P:regulation of DNA-templated transcription"/>
    <property type="evidence" value="ECO:0000314"/>
    <property type="project" value="FlyBase"/>
</dbReference>
<dbReference type="FunFam" id="3.30.160.60:FF:003087">
    <property type="entry name" value="U-shaped, isoform D"/>
    <property type="match status" value="1"/>
</dbReference>
<dbReference type="Gene3D" id="3.30.160.60">
    <property type="entry name" value="Classic Zinc Finger"/>
    <property type="match status" value="2"/>
</dbReference>
<dbReference type="IDEAL" id="IID50106"/>
<dbReference type="InterPro" id="IPR039746">
    <property type="entry name" value="FOG"/>
</dbReference>
<dbReference type="InterPro" id="IPR034731">
    <property type="entry name" value="ZF_CCHC_FOG"/>
</dbReference>
<dbReference type="InterPro" id="IPR036236">
    <property type="entry name" value="Znf_C2H2_sf"/>
</dbReference>
<dbReference type="InterPro" id="IPR013087">
    <property type="entry name" value="Znf_C2H2_type"/>
</dbReference>
<dbReference type="PANTHER" id="PTHR12958">
    <property type="entry name" value="FRIEND OF GATA2-RELATED"/>
    <property type="match status" value="1"/>
</dbReference>
<dbReference type="PANTHER" id="PTHR12958:SF3">
    <property type="entry name" value="ZINC FINGER PROTEIN USH"/>
    <property type="match status" value="1"/>
</dbReference>
<dbReference type="Pfam" id="PF12874">
    <property type="entry name" value="zf-met"/>
    <property type="match status" value="2"/>
</dbReference>
<dbReference type="SMART" id="SM00355">
    <property type="entry name" value="ZnF_C2H2"/>
    <property type="match status" value="8"/>
</dbReference>
<dbReference type="SUPFAM" id="SSF57667">
    <property type="entry name" value="beta-beta-alpha zinc fingers"/>
    <property type="match status" value="6"/>
</dbReference>
<dbReference type="PROSITE" id="PS51810">
    <property type="entry name" value="ZF_CCHC_FOG"/>
    <property type="match status" value="5"/>
</dbReference>
<dbReference type="PROSITE" id="PS50157">
    <property type="entry name" value="ZINC_FINGER_C2H2_2"/>
    <property type="match status" value="2"/>
</dbReference>
<sequence>MLSSNTRGDCSDTAEEMTVDSRDSKDLSAQDIGEQKQQQMEDQLEDQLNDSRDPQNNNNNIDDDADEDAEFEEPEKANPQQDQDLGETEMEQEHDLQQEDLQQELPANSPSTPPRSPSSPQLIPKLEQPATPPSEPEASPCPSPSPCPTPKYPKVRLNALLASDPALKPDAKELTLPDSRLLAPPPLVKPDTQAQPEVAEPLLKPARFMCLPCGIAFSSPSTLEAHQAYYCSHRIKDTDEAGSDKSGAGGSGATAGDAAGLTGGSTEPPAKMARTGKQYGCTQCSYSADKKVSLNRHMRMHQTSPAAPTLAGLPSLLQNGIAPPGVTPNPMEDSSSQQTDRYCSHCDIRFNNIKTYRAHKQHYCSSRRPEGQLTPKPDASPGAGSGPGSAGGSIGVSAQAATPGKLSPQARNKTPTPAMVAVAAAAAAAAASLQATPHSHPPFLALPTHPIIIVPCSLIRAASFIPGPLPTPNSGIVNPETTCFTVDNGTIKPLATALVGATLEPERPSAPSSAAEATEAKSSPPEPKRKEAGLTRESAPLDLSLRRSPITLNSLSLRQRQLRNALLDVEEVLLAGVGTGKENVETPRGGGSVTPEQIVCAPSLPSSPSMSPSPKRRAISPRSSGAGSASSMSPPGLNVAVPHLLDMRSMLPADFGLSESLLAKTNPELALKLAAAAAAAAVAGSSGAAAFPPASLPAQTSSGNPGSGGSAGGAQQPQIYVKKGVSKCMECNIVFCKYENYLAHKQHYCSARSQEGASEVDVKSAVSPSIAGAGGLGAGAAEAASSVETTPVAYQQLICAACGIKYTSLDNLRAHQNYYCPKGGAVAAPAATPTDPGQLGMPKEKCGKCKTLHEIGLPCPPPVANPLAAPTVNPQPATNSLNKCPVCGVVSPTAALAKKHMEMHGTVKAYRCSICQYKGNTLRGMRTHIRTHFDKKTSDVNEELYMTCIFEEDASALSQELVTPTGASTTTGHDSMDHPSQMFNCDYCNYVSTYKGNVLRHMKLMHPHVAINSPSISPDTRDQDVTSNPTTNQHSNSDVSNGEAPSFHIKSEPLDPPPTVNLVHENNNSPIATPHIKAEPIEVGADAAPGGLVPPMTSPLGNSSSVAAAAAAAAEVMKKYCSTCDISFNYVKTYLAHKQFYCKNKPIRPEASDSPSPNHLGGGVAVGLGIGGLVGGHGQQKNKENLQEAAI</sequence>
<name>USH_DROME</name>
<gene>
    <name type="primary">ush</name>
    <name type="ORF">CG2762</name>
</gene>
<reference key="1">
    <citation type="journal article" date="1997" name="Genes Dev.">
        <title>U-shaped encodes a zinc finger protein that regulates the proneural genes achaete and scute during the formation of bristles in Drosophila.</title>
        <authorList>
            <person name="Cubadda Y."/>
            <person name="Heitzler P."/>
            <person name="Ray R.P."/>
            <person name="Bourouis M."/>
            <person name="Ramain P."/>
            <person name="Gelbart W."/>
            <person name="Simpson P."/>
            <person name="Haenlin M."/>
        </authorList>
    </citation>
    <scope>NUCLEOTIDE SEQUENCE [MRNA]</scope>
    <scope>FUNCTION</scope>
    <scope>SUBCELLULAR LOCATION</scope>
    <scope>TISSUE SPECIFICITY</scope>
    <source>
        <tissue>Embryo</tissue>
    </source>
</reference>
<reference key="2">
    <citation type="journal article" date="2000" name="Science">
        <title>The genome sequence of Drosophila melanogaster.</title>
        <authorList>
            <person name="Adams M.D."/>
            <person name="Celniker S.E."/>
            <person name="Holt R.A."/>
            <person name="Evans C.A."/>
            <person name="Gocayne J.D."/>
            <person name="Amanatides P.G."/>
            <person name="Scherer S.E."/>
            <person name="Li P.W."/>
            <person name="Hoskins R.A."/>
            <person name="Galle R.F."/>
            <person name="George R.A."/>
            <person name="Lewis S.E."/>
            <person name="Richards S."/>
            <person name="Ashburner M."/>
            <person name="Henderson S.N."/>
            <person name="Sutton G.G."/>
            <person name="Wortman J.R."/>
            <person name="Yandell M.D."/>
            <person name="Zhang Q."/>
            <person name="Chen L.X."/>
            <person name="Brandon R.C."/>
            <person name="Rogers Y.-H.C."/>
            <person name="Blazej R.G."/>
            <person name="Champe M."/>
            <person name="Pfeiffer B.D."/>
            <person name="Wan K.H."/>
            <person name="Doyle C."/>
            <person name="Baxter E.G."/>
            <person name="Helt G."/>
            <person name="Nelson C.R."/>
            <person name="Miklos G.L.G."/>
            <person name="Abril J.F."/>
            <person name="Agbayani A."/>
            <person name="An H.-J."/>
            <person name="Andrews-Pfannkoch C."/>
            <person name="Baldwin D."/>
            <person name="Ballew R.M."/>
            <person name="Basu A."/>
            <person name="Baxendale J."/>
            <person name="Bayraktaroglu L."/>
            <person name="Beasley E.M."/>
            <person name="Beeson K.Y."/>
            <person name="Benos P.V."/>
            <person name="Berman B.P."/>
            <person name="Bhandari D."/>
            <person name="Bolshakov S."/>
            <person name="Borkova D."/>
            <person name="Botchan M.R."/>
            <person name="Bouck J."/>
            <person name="Brokstein P."/>
            <person name="Brottier P."/>
            <person name="Burtis K.C."/>
            <person name="Busam D.A."/>
            <person name="Butler H."/>
            <person name="Cadieu E."/>
            <person name="Center A."/>
            <person name="Chandra I."/>
            <person name="Cherry J.M."/>
            <person name="Cawley S."/>
            <person name="Dahlke C."/>
            <person name="Davenport L.B."/>
            <person name="Davies P."/>
            <person name="de Pablos B."/>
            <person name="Delcher A."/>
            <person name="Deng Z."/>
            <person name="Mays A.D."/>
            <person name="Dew I."/>
            <person name="Dietz S.M."/>
            <person name="Dodson K."/>
            <person name="Doup L.E."/>
            <person name="Downes M."/>
            <person name="Dugan-Rocha S."/>
            <person name="Dunkov B.C."/>
            <person name="Dunn P."/>
            <person name="Durbin K.J."/>
            <person name="Evangelista C.C."/>
            <person name="Ferraz C."/>
            <person name="Ferriera S."/>
            <person name="Fleischmann W."/>
            <person name="Fosler C."/>
            <person name="Gabrielian A.E."/>
            <person name="Garg N.S."/>
            <person name="Gelbart W.M."/>
            <person name="Glasser K."/>
            <person name="Glodek A."/>
            <person name="Gong F."/>
            <person name="Gorrell J.H."/>
            <person name="Gu Z."/>
            <person name="Guan P."/>
            <person name="Harris M."/>
            <person name="Harris N.L."/>
            <person name="Harvey D.A."/>
            <person name="Heiman T.J."/>
            <person name="Hernandez J.R."/>
            <person name="Houck J."/>
            <person name="Hostin D."/>
            <person name="Houston K.A."/>
            <person name="Howland T.J."/>
            <person name="Wei M.-H."/>
            <person name="Ibegwam C."/>
            <person name="Jalali M."/>
            <person name="Kalush F."/>
            <person name="Karpen G.H."/>
            <person name="Ke Z."/>
            <person name="Kennison J.A."/>
            <person name="Ketchum K.A."/>
            <person name="Kimmel B.E."/>
            <person name="Kodira C.D."/>
            <person name="Kraft C.L."/>
            <person name="Kravitz S."/>
            <person name="Kulp D."/>
            <person name="Lai Z."/>
            <person name="Lasko P."/>
            <person name="Lei Y."/>
            <person name="Levitsky A.A."/>
            <person name="Li J.H."/>
            <person name="Li Z."/>
            <person name="Liang Y."/>
            <person name="Lin X."/>
            <person name="Liu X."/>
            <person name="Mattei B."/>
            <person name="McIntosh T.C."/>
            <person name="McLeod M.P."/>
            <person name="McPherson D."/>
            <person name="Merkulov G."/>
            <person name="Milshina N.V."/>
            <person name="Mobarry C."/>
            <person name="Morris J."/>
            <person name="Moshrefi A."/>
            <person name="Mount S.M."/>
            <person name="Moy M."/>
            <person name="Murphy B."/>
            <person name="Murphy L."/>
            <person name="Muzny D.M."/>
            <person name="Nelson D.L."/>
            <person name="Nelson D.R."/>
            <person name="Nelson K.A."/>
            <person name="Nixon K."/>
            <person name="Nusskern D.R."/>
            <person name="Pacleb J.M."/>
            <person name="Palazzolo M."/>
            <person name="Pittman G.S."/>
            <person name="Pan S."/>
            <person name="Pollard J."/>
            <person name="Puri V."/>
            <person name="Reese M.G."/>
            <person name="Reinert K."/>
            <person name="Remington K."/>
            <person name="Saunders R.D.C."/>
            <person name="Scheeler F."/>
            <person name="Shen H."/>
            <person name="Shue B.C."/>
            <person name="Siden-Kiamos I."/>
            <person name="Simpson M."/>
            <person name="Skupski M.P."/>
            <person name="Smith T.J."/>
            <person name="Spier E."/>
            <person name="Spradling A.C."/>
            <person name="Stapleton M."/>
            <person name="Strong R."/>
            <person name="Sun E."/>
            <person name="Svirskas R."/>
            <person name="Tector C."/>
            <person name="Turner R."/>
            <person name="Venter E."/>
            <person name="Wang A.H."/>
            <person name="Wang X."/>
            <person name="Wang Z.-Y."/>
            <person name="Wassarman D.A."/>
            <person name="Weinstock G.M."/>
            <person name="Weissenbach J."/>
            <person name="Williams S.M."/>
            <person name="Woodage T."/>
            <person name="Worley K.C."/>
            <person name="Wu D."/>
            <person name="Yang S."/>
            <person name="Yao Q.A."/>
            <person name="Ye J."/>
            <person name="Yeh R.-F."/>
            <person name="Zaveri J.S."/>
            <person name="Zhan M."/>
            <person name="Zhang G."/>
            <person name="Zhao Q."/>
            <person name="Zheng L."/>
            <person name="Zheng X.H."/>
            <person name="Zhong F.N."/>
            <person name="Zhong W."/>
            <person name="Zhou X."/>
            <person name="Zhu S.C."/>
            <person name="Zhu X."/>
            <person name="Smith H.O."/>
            <person name="Gibbs R.A."/>
            <person name="Myers E.W."/>
            <person name="Rubin G.M."/>
            <person name="Venter J.C."/>
        </authorList>
    </citation>
    <scope>NUCLEOTIDE SEQUENCE [LARGE SCALE GENOMIC DNA]</scope>
    <source>
        <strain>Berkeley</strain>
    </source>
</reference>
<reference key="3">
    <citation type="journal article" date="2002" name="Genome Biol.">
        <title>Annotation of the Drosophila melanogaster euchromatic genome: a systematic review.</title>
        <authorList>
            <person name="Misra S."/>
            <person name="Crosby M.A."/>
            <person name="Mungall C.J."/>
            <person name="Matthews B.B."/>
            <person name="Campbell K.S."/>
            <person name="Hradecky P."/>
            <person name="Huang Y."/>
            <person name="Kaminker J.S."/>
            <person name="Millburn G.H."/>
            <person name="Prochnik S.E."/>
            <person name="Smith C.D."/>
            <person name="Tupy J.L."/>
            <person name="Whitfield E.J."/>
            <person name="Bayraktaroglu L."/>
            <person name="Berman B.P."/>
            <person name="Bettencourt B.R."/>
            <person name="Celniker S.E."/>
            <person name="de Grey A.D.N.J."/>
            <person name="Drysdale R.A."/>
            <person name="Harris N.L."/>
            <person name="Richter J."/>
            <person name="Russo S."/>
            <person name="Schroeder A.J."/>
            <person name="Shu S.Q."/>
            <person name="Stapleton M."/>
            <person name="Yamada C."/>
            <person name="Ashburner M."/>
            <person name="Gelbart W.M."/>
            <person name="Rubin G.M."/>
            <person name="Lewis S.E."/>
        </authorList>
    </citation>
    <scope>GENOME REANNOTATION</scope>
    <source>
        <strain>Berkeley</strain>
    </source>
</reference>
<reference key="4">
    <citation type="submission" date="2005-10" db="EMBL/GenBank/DDBJ databases">
        <authorList>
            <person name="Stapleton M."/>
            <person name="Carlson J.W."/>
            <person name="Chavez C."/>
            <person name="Frise E."/>
            <person name="George R.A."/>
            <person name="Pacleb J.M."/>
            <person name="Park S."/>
            <person name="Wan K.H."/>
            <person name="Yu C."/>
            <person name="Celniker S.E."/>
        </authorList>
    </citation>
    <scope>NUCLEOTIDE SEQUENCE [LARGE SCALE MRNA]</scope>
    <source>
        <strain>Berkeley</strain>
        <tissue>Embryo</tissue>
    </source>
</reference>
<reference key="5">
    <citation type="journal article" date="1997" name="Genes Dev.">
        <title>Transcriptional activity of pannier is regulated negatively by heterodimerization of the GATA DNA-binding domain with a cofactor encoded by the u-shaped gene of Drosophila.</title>
        <authorList>
            <person name="Haenlin M."/>
            <person name="Cubadda Y."/>
            <person name="Blondeau F."/>
            <person name="Heitzler P."/>
            <person name="Lutz Y."/>
            <person name="Simpson P."/>
            <person name="Ramain P."/>
        </authorList>
    </citation>
    <scope>FUNCTION</scope>
    <scope>INTERACTION WITH PNR</scope>
</reference>
<reference key="6">
    <citation type="journal article" date="1999" name="EMBO J.">
        <title>Transcriptional cofactors of the FOG family interact with GATA proteins by means of multiple zinc fingers.</title>
        <authorList>
            <person name="Fox A.H."/>
            <person name="Liew C."/>
            <person name="Holmes M."/>
            <person name="Kowalski K."/>
            <person name="Mackay J."/>
            <person name="Crossley M."/>
        </authorList>
    </citation>
    <scope>DOMAIN</scope>
</reference>
<reference key="7">
    <citation type="journal article" date="2000" name="Proc. Natl. Acad. Sci. U.S.A.">
        <title>The multitype zinc-finger protein U-shaped functions in heart cell specification in the Drosophila embryo.</title>
        <authorList>
            <person name="Fossett N."/>
            <person name="Zhang Q."/>
            <person name="Gajewski K."/>
            <person name="Choi C.Y."/>
            <person name="Kim Y."/>
            <person name="Schulz R.A."/>
        </authorList>
    </citation>
    <scope>FUNCTION</scope>
    <scope>TISSUE SPECIFICITY</scope>
</reference>
<reference key="8">
    <citation type="journal article" date="2001" name="Proc. Natl. Acad. Sci. U.S.A.">
        <title>The Friend of GATA proteins U-shaped, FOG-1, and FOG-2 function as negative regulators of blood, heart, and eye development in Drosophila.</title>
        <authorList>
            <person name="Fossett N."/>
            <person name="Tevosian S.G."/>
            <person name="Gajewski K."/>
            <person name="Zhang Q."/>
            <person name="Orkin S.H."/>
            <person name="Schulz R.A."/>
        </authorList>
    </citation>
    <scope>FUNCTION</scope>
    <scope>TISSUE SPECIFICITY</scope>
</reference>
<reference key="9">
    <citation type="journal article" date="2002" name="EMBO J.">
        <title>Two isoforms of Serpent containing either one or two GATA zinc fingers have different roles in Drosophila haematopoiesis.</title>
        <authorList>
            <person name="Waltzer L."/>
            <person name="Bataille L."/>
            <person name="Peyrefitte S."/>
            <person name="Haenlin M."/>
        </authorList>
    </citation>
    <scope>FUNCTION</scope>
    <scope>INTERACTION WITH SRP AND CTBP</scope>
</reference>
<reference key="10">
    <citation type="journal article" date="2003" name="Mech. Dev.">
        <title>Prepattern genes and signaling molecules regulate stripe expression to specify Drosophila flight muscle attachment sites.</title>
        <authorList>
            <person name="Ghazi A."/>
            <person name="Paul L."/>
            <person name="VijayRaghavan K."/>
        </authorList>
    </citation>
    <scope>FUNCTION</scope>
</reference>
<reference key="11">
    <citation type="journal article" date="2008" name="J. Proteome Res.">
        <title>Phosphoproteome analysis of Drosophila melanogaster embryos.</title>
        <authorList>
            <person name="Zhai B."/>
            <person name="Villen J."/>
            <person name="Beausoleil S.A."/>
            <person name="Mintseris J."/>
            <person name="Gygi S.P."/>
        </authorList>
    </citation>
    <scope>PHOSPHORYLATION [LARGE SCALE ANALYSIS] AT SER-116; SER-118; SER-1013; SER-1015; SER-1017 AND SER-1156</scope>
    <scope>IDENTIFICATION BY MASS SPECTROMETRY</scope>
    <source>
        <tissue>Embryo</tissue>
    </source>
</reference>
<reference key="12">
    <citation type="journal article" date="2000" name="Structure">
        <title>Solution structures of two CCHC zinc fingers from the FOG family protein U-shaped that mediate protein-protein interactions.</title>
        <authorList>
            <person name="Liew C.K."/>
            <person name="Kowalski K."/>
            <person name="Fox A.H."/>
            <person name="Newton A."/>
            <person name="Sharpe B.K."/>
            <person name="Crossley M."/>
            <person name="Mackay J.P."/>
        </authorList>
    </citation>
    <scope>STRUCTURE BY NMR OF 202-235 AND 1113-1146</scope>
    <scope>ZINC-BINDING</scope>
    <scope>MUTAGENESIS OF CYS-231</scope>
</reference>
<reference key="13">
    <citation type="journal article" date="2002" name="J. Biol. Chem.">
        <title>Characterization of the conserved interaction between GATA and FOG family proteins.</title>
        <authorList>
            <person name="Kowalski K."/>
            <person name="Liew C.K."/>
            <person name="Matthews J.M."/>
            <person name="Gell D.A."/>
            <person name="Crossley M."/>
            <person name="Mackay J.P."/>
        </authorList>
    </citation>
    <scope>STRUCTURE BY NMR OF 1113-1146 MUTANT CYS-1142</scope>
</reference>
<keyword id="KW-0002">3D-structure</keyword>
<keyword id="KW-0238">DNA-binding</keyword>
<keyword id="KW-0479">Metal-binding</keyword>
<keyword id="KW-0539">Nucleus</keyword>
<keyword id="KW-0597">Phosphoprotein</keyword>
<keyword id="KW-1185">Reference proteome</keyword>
<keyword id="KW-0677">Repeat</keyword>
<keyword id="KW-0678">Repressor</keyword>
<keyword id="KW-0804">Transcription</keyword>
<keyword id="KW-0805">Transcription regulation</keyword>
<keyword id="KW-0862">Zinc</keyword>
<keyword id="KW-0863">Zinc-finger</keyword>
<feature type="chain" id="PRO_0000221047" description="Zinc finger protein ush">
    <location>
        <begin position="1"/>
        <end position="1191"/>
    </location>
</feature>
<feature type="zinc finger region" description="CCHC FOG-type 1" evidence="2">
    <location>
        <begin position="202"/>
        <end position="235"/>
    </location>
</feature>
<feature type="zinc finger region" description="C2H2-type 1" evidence="1">
    <location>
        <begin position="279"/>
        <end position="301"/>
    </location>
</feature>
<feature type="zinc finger region" description="CCHC FOG-type 2" evidence="2">
    <location>
        <begin position="335"/>
        <end position="368"/>
    </location>
</feature>
<feature type="zinc finger region" description="CCHC FOG-type 3" evidence="2">
    <location>
        <begin position="720"/>
        <end position="753"/>
    </location>
</feature>
<feature type="zinc finger region" description="CCHC FOG-type 4" evidence="2">
    <location>
        <begin position="791"/>
        <end position="824"/>
    </location>
</feature>
<feature type="zinc finger region" description="C2H2-type 2" evidence="1">
    <location>
        <begin position="882"/>
        <end position="907"/>
    </location>
</feature>
<feature type="zinc finger region" description="C2H2-type 3" evidence="1">
    <location>
        <begin position="910"/>
        <end position="932"/>
    </location>
</feature>
<feature type="zinc finger region" description="C2H2-type 4" evidence="1">
    <location>
        <begin position="983"/>
        <end position="1006"/>
    </location>
</feature>
<feature type="zinc finger region" description="CCHC FOG-type 5" evidence="2">
    <location>
        <begin position="1113"/>
        <end position="1146"/>
    </location>
</feature>
<feature type="region of interest" description="Disordered" evidence="3">
    <location>
        <begin position="1"/>
        <end position="153"/>
    </location>
</feature>
<feature type="region of interest" description="Disordered" evidence="3">
    <location>
        <begin position="169"/>
        <end position="194"/>
    </location>
</feature>
<feature type="region of interest" description="Disordered" evidence="3">
    <location>
        <begin position="239"/>
        <end position="274"/>
    </location>
</feature>
<feature type="region of interest" description="Disordered" evidence="3">
    <location>
        <begin position="304"/>
        <end position="338"/>
    </location>
</feature>
<feature type="region of interest" description="Disordered" evidence="3">
    <location>
        <begin position="361"/>
        <end position="413"/>
    </location>
</feature>
<feature type="region of interest" description="Disordered" evidence="3">
    <location>
        <begin position="504"/>
        <end position="540"/>
    </location>
</feature>
<feature type="region of interest" description="Disordered" evidence="3">
    <location>
        <begin position="601"/>
        <end position="635"/>
    </location>
</feature>
<feature type="region of interest" description="Disordered" evidence="3">
    <location>
        <begin position="1011"/>
        <end position="1073"/>
    </location>
</feature>
<feature type="compositionally biased region" description="Basic and acidic residues" evidence="3">
    <location>
        <begin position="19"/>
        <end position="28"/>
    </location>
</feature>
<feature type="compositionally biased region" description="Acidic residues" evidence="3">
    <location>
        <begin position="61"/>
        <end position="73"/>
    </location>
</feature>
<feature type="compositionally biased region" description="Pro residues" evidence="3">
    <location>
        <begin position="130"/>
        <end position="151"/>
    </location>
</feature>
<feature type="compositionally biased region" description="Low complexity" evidence="3">
    <location>
        <begin position="254"/>
        <end position="266"/>
    </location>
</feature>
<feature type="compositionally biased region" description="Gly residues" evidence="3">
    <location>
        <begin position="383"/>
        <end position="394"/>
    </location>
</feature>
<feature type="compositionally biased region" description="Low complexity" evidence="3">
    <location>
        <begin position="509"/>
        <end position="523"/>
    </location>
</feature>
<feature type="compositionally biased region" description="Low complexity" evidence="3">
    <location>
        <begin position="602"/>
        <end position="613"/>
    </location>
</feature>
<feature type="compositionally biased region" description="Low complexity" evidence="3">
    <location>
        <begin position="620"/>
        <end position="635"/>
    </location>
</feature>
<feature type="compositionally biased region" description="Polar residues" evidence="3">
    <location>
        <begin position="1025"/>
        <end position="1040"/>
    </location>
</feature>
<feature type="binding site" evidence="2">
    <location>
        <position position="210"/>
    </location>
    <ligand>
        <name>Zn(2+)</name>
        <dbReference type="ChEBI" id="CHEBI:29105"/>
        <label>1</label>
    </ligand>
</feature>
<feature type="binding site" evidence="2">
    <location>
        <position position="213"/>
    </location>
    <ligand>
        <name>Zn(2+)</name>
        <dbReference type="ChEBI" id="CHEBI:29105"/>
        <label>1</label>
    </ligand>
</feature>
<feature type="binding site" evidence="2">
    <location>
        <position position="226"/>
    </location>
    <ligand>
        <name>Zn(2+)</name>
        <dbReference type="ChEBI" id="CHEBI:29105"/>
        <label>1</label>
    </ligand>
</feature>
<feature type="binding site" evidence="2">
    <location>
        <position position="231"/>
    </location>
    <ligand>
        <name>Zn(2+)</name>
        <dbReference type="ChEBI" id="CHEBI:29105"/>
        <label>1</label>
    </ligand>
</feature>
<feature type="binding site" evidence="2">
    <location>
        <position position="343"/>
    </location>
    <ligand>
        <name>Zn(2+)</name>
        <dbReference type="ChEBI" id="CHEBI:29105"/>
        <label>2</label>
    </ligand>
</feature>
<feature type="binding site" evidence="2">
    <location>
        <position position="346"/>
    </location>
    <ligand>
        <name>Zn(2+)</name>
        <dbReference type="ChEBI" id="CHEBI:29105"/>
        <label>2</label>
    </ligand>
</feature>
<feature type="binding site" evidence="2">
    <location>
        <position position="359"/>
    </location>
    <ligand>
        <name>Zn(2+)</name>
        <dbReference type="ChEBI" id="CHEBI:29105"/>
        <label>2</label>
    </ligand>
</feature>
<feature type="binding site" evidence="2">
    <location>
        <position position="364"/>
    </location>
    <ligand>
        <name>Zn(2+)</name>
        <dbReference type="ChEBI" id="CHEBI:29105"/>
        <label>2</label>
    </ligand>
</feature>
<feature type="binding site" evidence="2">
    <location>
        <position position="728"/>
    </location>
    <ligand>
        <name>Zn(2+)</name>
        <dbReference type="ChEBI" id="CHEBI:29105"/>
        <label>3</label>
    </ligand>
</feature>
<feature type="binding site" evidence="2">
    <location>
        <position position="731"/>
    </location>
    <ligand>
        <name>Zn(2+)</name>
        <dbReference type="ChEBI" id="CHEBI:29105"/>
        <label>3</label>
    </ligand>
</feature>
<feature type="binding site" evidence="2">
    <location>
        <position position="744"/>
    </location>
    <ligand>
        <name>Zn(2+)</name>
        <dbReference type="ChEBI" id="CHEBI:29105"/>
        <label>3</label>
    </ligand>
</feature>
<feature type="binding site" evidence="2">
    <location>
        <position position="749"/>
    </location>
    <ligand>
        <name>Zn(2+)</name>
        <dbReference type="ChEBI" id="CHEBI:29105"/>
        <label>3</label>
    </ligand>
</feature>
<feature type="binding site" evidence="2">
    <location>
        <position position="799"/>
    </location>
    <ligand>
        <name>Zn(2+)</name>
        <dbReference type="ChEBI" id="CHEBI:29105"/>
        <label>4</label>
    </ligand>
</feature>
<feature type="binding site" evidence="2">
    <location>
        <position position="802"/>
    </location>
    <ligand>
        <name>Zn(2+)</name>
        <dbReference type="ChEBI" id="CHEBI:29105"/>
        <label>4</label>
    </ligand>
</feature>
<feature type="binding site" evidence="2">
    <location>
        <position position="815"/>
    </location>
    <ligand>
        <name>Zn(2+)</name>
        <dbReference type="ChEBI" id="CHEBI:29105"/>
        <label>4</label>
    </ligand>
</feature>
<feature type="binding site" evidence="2">
    <location>
        <position position="820"/>
    </location>
    <ligand>
        <name>Zn(2+)</name>
        <dbReference type="ChEBI" id="CHEBI:29105"/>
        <label>4</label>
    </ligand>
</feature>
<feature type="binding site" evidence="2">
    <location>
        <position position="1121"/>
    </location>
    <ligand>
        <name>Zn(2+)</name>
        <dbReference type="ChEBI" id="CHEBI:29105"/>
        <label>5</label>
    </ligand>
</feature>
<feature type="binding site" evidence="2">
    <location>
        <position position="1124"/>
    </location>
    <ligand>
        <name>Zn(2+)</name>
        <dbReference type="ChEBI" id="CHEBI:29105"/>
        <label>5</label>
    </ligand>
</feature>
<feature type="binding site" evidence="2">
    <location>
        <position position="1137"/>
    </location>
    <ligand>
        <name>Zn(2+)</name>
        <dbReference type="ChEBI" id="CHEBI:29105"/>
        <label>5</label>
    </ligand>
</feature>
<feature type="binding site" evidence="2">
    <location>
        <position position="1142"/>
    </location>
    <ligand>
        <name>Zn(2+)</name>
        <dbReference type="ChEBI" id="CHEBI:29105"/>
        <label>5</label>
    </ligand>
</feature>
<feature type="modified residue" description="Phosphoserine" evidence="10">
    <location>
        <position position="116"/>
    </location>
</feature>
<feature type="modified residue" description="Phosphoserine" evidence="10">
    <location>
        <position position="118"/>
    </location>
</feature>
<feature type="modified residue" description="Phosphoserine" evidence="10">
    <location>
        <position position="1013"/>
    </location>
</feature>
<feature type="modified residue" description="Phosphoserine" evidence="10">
    <location>
        <position position="1015"/>
    </location>
</feature>
<feature type="modified residue" description="Phosphoserine" evidence="10">
    <location>
        <position position="1017"/>
    </location>
</feature>
<feature type="modified residue" description="Phosphoserine" evidence="10">
    <location>
        <position position="1156"/>
    </location>
</feature>
<feature type="mutagenesis site" description="Abolishes interaction with GATA-type zinc fingers." evidence="6">
    <original>C</original>
    <variation>A</variation>
    <location>
        <position position="231"/>
    </location>
</feature>
<feature type="mutagenesis site" description="Transforms the C2HC-type zinc finger into a C2H2-type, leading to abolish interaction with pnr.">
    <original>C</original>
    <variation>H</variation>
    <location>
        <position position="1142"/>
    </location>
</feature>
<feature type="sequence conflict" description="In Ref. 1; CAA72991." evidence="13" ref="1">
    <original>P</original>
    <variation>H</variation>
    <location>
        <position position="524"/>
    </location>
</feature>
<feature type="sequence conflict" description="In Ref. 1; CAA72991." evidence="13" ref="1">
    <original>A</original>
    <variation>S</variation>
    <location>
        <position position="532"/>
    </location>
</feature>
<feature type="sequence conflict" description="In Ref. 1; CAA72991." evidence="13" ref="1">
    <original>P</original>
    <variation>A</variation>
    <location>
        <position position="1045"/>
    </location>
</feature>
<feature type="strand" evidence="15">
    <location>
        <begin position="202"/>
        <end position="204"/>
    </location>
</feature>
<feature type="turn" evidence="15">
    <location>
        <begin position="211"/>
        <end position="213"/>
    </location>
</feature>
<feature type="helix" evidence="15">
    <location>
        <begin position="220"/>
        <end position="229"/>
    </location>
</feature>
<feature type="strand" evidence="16">
    <location>
        <begin position="1113"/>
        <end position="1115"/>
    </location>
</feature>
<feature type="strand" evidence="16">
    <location>
        <begin position="1118"/>
        <end position="1121"/>
    </location>
</feature>
<feature type="turn" evidence="14">
    <location>
        <begin position="1122"/>
        <end position="1124"/>
    </location>
</feature>
<feature type="helix" evidence="14">
    <location>
        <begin position="1131"/>
        <end position="1140"/>
    </location>
</feature>
<proteinExistence type="evidence at protein level"/>
<evidence type="ECO:0000255" key="1">
    <source>
        <dbReference type="PROSITE-ProRule" id="PRU00042"/>
    </source>
</evidence>
<evidence type="ECO:0000255" key="2">
    <source>
        <dbReference type="PROSITE-ProRule" id="PRU01153"/>
    </source>
</evidence>
<evidence type="ECO:0000256" key="3">
    <source>
        <dbReference type="SAM" id="MobiDB-lite"/>
    </source>
</evidence>
<evidence type="ECO:0000269" key="4">
    <source>
    </source>
</evidence>
<evidence type="ECO:0000269" key="5">
    <source>
    </source>
</evidence>
<evidence type="ECO:0000269" key="6">
    <source>
    </source>
</evidence>
<evidence type="ECO:0000269" key="7">
    <source>
    </source>
</evidence>
<evidence type="ECO:0000269" key="8">
    <source>
    </source>
</evidence>
<evidence type="ECO:0000269" key="9">
    <source>
    </source>
</evidence>
<evidence type="ECO:0000269" key="10">
    <source>
    </source>
</evidence>
<evidence type="ECO:0000269" key="11">
    <source>
    </source>
</evidence>
<evidence type="ECO:0000269" key="12">
    <source>
    </source>
</evidence>
<evidence type="ECO:0000305" key="13"/>
<evidence type="ECO:0007829" key="14">
    <source>
        <dbReference type="PDB" id="1FU9"/>
    </source>
</evidence>
<evidence type="ECO:0007829" key="15">
    <source>
        <dbReference type="PDB" id="1FV5"/>
    </source>
</evidence>
<evidence type="ECO:0007829" key="16">
    <source>
        <dbReference type="PDB" id="1JN7"/>
    </source>
</evidence>